<reference key="1">
    <citation type="journal article" date="1990" name="Plant Cell Physiol.">
        <title>Classification and characterization of cDNA that encodes the light-harvesting chlorophyll a/b binding protein of photosystem II from rice.</title>
        <authorList>
            <person name="Matsuoka M."/>
        </authorList>
    </citation>
    <scope>NUCLEOTIDE SEQUENCE [MRNA]</scope>
    <source>
        <strain>cv. Nipponbare</strain>
    </source>
</reference>
<reference key="2">
    <citation type="submission" date="1998-04" db="EMBL/GenBank/DDBJ databases">
        <title>Molecular cloning and characterization of cDNA encoding chlorophyll a/b binding protein of photosystem II in rice.</title>
        <authorList>
            <person name="Yoon U.H."/>
            <person name="Hahn J.H."/>
            <person name="Yun C.-H."/>
            <person name="Park J.Y."/>
            <person name="Eun M.Y."/>
        </authorList>
    </citation>
    <scope>NUCLEOTIDE SEQUENCE [MRNA]</scope>
    <source>
        <strain>cv. Ilpoom</strain>
        <tissue>Seedling</tissue>
    </source>
</reference>
<reference key="3">
    <citation type="journal article" date="2005" name="Genome Res.">
        <title>Sequence, annotation, and analysis of synteny between rice chromosome 3 and diverged grass species.</title>
        <authorList>
            <consortium name="The rice chromosome 3 sequencing consortium"/>
            <person name="Buell C.R."/>
            <person name="Yuan Q."/>
            <person name="Ouyang S."/>
            <person name="Liu J."/>
            <person name="Zhu W."/>
            <person name="Wang A."/>
            <person name="Maiti R."/>
            <person name="Haas B."/>
            <person name="Wortman J."/>
            <person name="Pertea M."/>
            <person name="Jones K.M."/>
            <person name="Kim M."/>
            <person name="Overton L."/>
            <person name="Tsitrin T."/>
            <person name="Fadrosh D."/>
            <person name="Bera J."/>
            <person name="Weaver B."/>
            <person name="Jin S."/>
            <person name="Johri S."/>
            <person name="Reardon M."/>
            <person name="Webb K."/>
            <person name="Hill J."/>
            <person name="Moffat K."/>
            <person name="Tallon L."/>
            <person name="Van Aken S."/>
            <person name="Lewis M."/>
            <person name="Utterback T."/>
            <person name="Feldblyum T."/>
            <person name="Zismann V."/>
            <person name="Iobst S."/>
            <person name="Hsiao J."/>
            <person name="de Vazeille A.R."/>
            <person name="Salzberg S.L."/>
            <person name="White O."/>
            <person name="Fraser C.M."/>
            <person name="Yu Y."/>
            <person name="Kim H."/>
            <person name="Rambo T."/>
            <person name="Currie J."/>
            <person name="Collura K."/>
            <person name="Kernodle-Thompson S."/>
            <person name="Wei F."/>
            <person name="Kudrna K."/>
            <person name="Ammiraju J.S.S."/>
            <person name="Luo M."/>
            <person name="Goicoechea J.L."/>
            <person name="Wing R.A."/>
            <person name="Henry D."/>
            <person name="Oates R."/>
            <person name="Palmer M."/>
            <person name="Pries G."/>
            <person name="Saski C."/>
            <person name="Simmons J."/>
            <person name="Soderlund C."/>
            <person name="Nelson W."/>
            <person name="de la Bastide M."/>
            <person name="Spiegel L."/>
            <person name="Nascimento L."/>
            <person name="Huang E."/>
            <person name="Preston R."/>
            <person name="Zutavern T."/>
            <person name="Palmer L."/>
            <person name="O'Shaughnessy A."/>
            <person name="Dike S."/>
            <person name="McCombie W.R."/>
            <person name="Minx P."/>
            <person name="Cordum H."/>
            <person name="Wilson R."/>
            <person name="Jin W."/>
            <person name="Lee H.R."/>
            <person name="Jiang J."/>
            <person name="Jackson S."/>
        </authorList>
    </citation>
    <scope>NUCLEOTIDE SEQUENCE [LARGE SCALE GENOMIC DNA]</scope>
    <source>
        <strain>cv. Nipponbare</strain>
    </source>
</reference>
<reference key="4">
    <citation type="journal article" date="2005" name="Nature">
        <title>The map-based sequence of the rice genome.</title>
        <authorList>
            <consortium name="International rice genome sequencing project (IRGSP)"/>
        </authorList>
    </citation>
    <scope>NUCLEOTIDE SEQUENCE [LARGE SCALE GENOMIC DNA]</scope>
    <source>
        <strain>cv. Nipponbare</strain>
    </source>
</reference>
<reference key="5">
    <citation type="journal article" date="2008" name="Nucleic Acids Res.">
        <title>The rice annotation project database (RAP-DB): 2008 update.</title>
        <authorList>
            <consortium name="The rice annotation project (RAP)"/>
        </authorList>
    </citation>
    <scope>GENOME REANNOTATION</scope>
    <source>
        <strain>cv. Nipponbare</strain>
    </source>
</reference>
<reference key="6">
    <citation type="journal article" date="2013" name="Rice">
        <title>Improvement of the Oryza sativa Nipponbare reference genome using next generation sequence and optical map data.</title>
        <authorList>
            <person name="Kawahara Y."/>
            <person name="de la Bastide M."/>
            <person name="Hamilton J.P."/>
            <person name="Kanamori H."/>
            <person name="McCombie W.R."/>
            <person name="Ouyang S."/>
            <person name="Schwartz D.C."/>
            <person name="Tanaka T."/>
            <person name="Wu J."/>
            <person name="Zhou S."/>
            <person name="Childs K.L."/>
            <person name="Davidson R.M."/>
            <person name="Lin H."/>
            <person name="Quesada-Ocampo L."/>
            <person name="Vaillancourt B."/>
            <person name="Sakai H."/>
            <person name="Lee S.S."/>
            <person name="Kim J."/>
            <person name="Numa H."/>
            <person name="Itoh T."/>
            <person name="Buell C.R."/>
            <person name="Matsumoto T."/>
        </authorList>
    </citation>
    <scope>GENOME REANNOTATION</scope>
    <source>
        <strain>cv. Nipponbare</strain>
    </source>
</reference>
<reference key="7">
    <citation type="journal article" date="2005" name="PLoS Biol.">
        <title>The genomes of Oryza sativa: a history of duplications.</title>
        <authorList>
            <person name="Yu J."/>
            <person name="Wang J."/>
            <person name="Lin W."/>
            <person name="Li S."/>
            <person name="Li H."/>
            <person name="Zhou J."/>
            <person name="Ni P."/>
            <person name="Dong W."/>
            <person name="Hu S."/>
            <person name="Zeng C."/>
            <person name="Zhang J."/>
            <person name="Zhang Y."/>
            <person name="Li R."/>
            <person name="Xu Z."/>
            <person name="Li S."/>
            <person name="Li X."/>
            <person name="Zheng H."/>
            <person name="Cong L."/>
            <person name="Lin L."/>
            <person name="Yin J."/>
            <person name="Geng J."/>
            <person name="Li G."/>
            <person name="Shi J."/>
            <person name="Liu J."/>
            <person name="Lv H."/>
            <person name="Li J."/>
            <person name="Wang J."/>
            <person name="Deng Y."/>
            <person name="Ran L."/>
            <person name="Shi X."/>
            <person name="Wang X."/>
            <person name="Wu Q."/>
            <person name="Li C."/>
            <person name="Ren X."/>
            <person name="Wang J."/>
            <person name="Wang X."/>
            <person name="Li D."/>
            <person name="Liu D."/>
            <person name="Zhang X."/>
            <person name="Ji Z."/>
            <person name="Zhao W."/>
            <person name="Sun Y."/>
            <person name="Zhang Z."/>
            <person name="Bao J."/>
            <person name="Han Y."/>
            <person name="Dong L."/>
            <person name="Ji J."/>
            <person name="Chen P."/>
            <person name="Wu S."/>
            <person name="Liu J."/>
            <person name="Xiao Y."/>
            <person name="Bu D."/>
            <person name="Tan J."/>
            <person name="Yang L."/>
            <person name="Ye C."/>
            <person name="Zhang J."/>
            <person name="Xu J."/>
            <person name="Zhou Y."/>
            <person name="Yu Y."/>
            <person name="Zhang B."/>
            <person name="Zhuang S."/>
            <person name="Wei H."/>
            <person name="Liu B."/>
            <person name="Lei M."/>
            <person name="Yu H."/>
            <person name="Li Y."/>
            <person name="Xu H."/>
            <person name="Wei S."/>
            <person name="He X."/>
            <person name="Fang L."/>
            <person name="Zhang Z."/>
            <person name="Zhang Y."/>
            <person name="Huang X."/>
            <person name="Su Z."/>
            <person name="Tong W."/>
            <person name="Li J."/>
            <person name="Tong Z."/>
            <person name="Li S."/>
            <person name="Ye J."/>
            <person name="Wang L."/>
            <person name="Fang L."/>
            <person name="Lei T."/>
            <person name="Chen C.-S."/>
            <person name="Chen H.-C."/>
            <person name="Xu Z."/>
            <person name="Li H."/>
            <person name="Huang H."/>
            <person name="Zhang F."/>
            <person name="Xu H."/>
            <person name="Li N."/>
            <person name="Zhao C."/>
            <person name="Li S."/>
            <person name="Dong L."/>
            <person name="Huang Y."/>
            <person name="Li L."/>
            <person name="Xi Y."/>
            <person name="Qi Q."/>
            <person name="Li W."/>
            <person name="Zhang B."/>
            <person name="Hu W."/>
            <person name="Zhang Y."/>
            <person name="Tian X."/>
            <person name="Jiao Y."/>
            <person name="Liang X."/>
            <person name="Jin J."/>
            <person name="Gao L."/>
            <person name="Zheng W."/>
            <person name="Hao B."/>
            <person name="Liu S.-M."/>
            <person name="Wang W."/>
            <person name="Yuan L."/>
            <person name="Cao M."/>
            <person name="McDermott J."/>
            <person name="Samudrala R."/>
            <person name="Wang J."/>
            <person name="Wong G.K.-S."/>
            <person name="Yang H."/>
        </authorList>
    </citation>
    <scope>NUCLEOTIDE SEQUENCE [LARGE SCALE GENOMIC DNA]</scope>
    <source>
        <strain>cv. Nipponbare</strain>
    </source>
</reference>
<gene>
    <name type="primary">RCABP89</name>
    <name type="ordered locus">Os03g0592500</name>
    <name type="ordered locus">LOC_Os03g39610</name>
    <name type="ORF">OsJ_011145</name>
    <name type="ORF">OSJNBb0056O10.8</name>
</gene>
<comment type="function">
    <text>The light-harvesting complex (LHC) functions as a light receptor, it captures and delivers excitation energy to photosystems with which it is closely associated.</text>
</comment>
<comment type="cofactor">
    <text evidence="1">Binds at least 14 chlorophylls (8 Chl-a and 6 Chl-b) and carotenoids such as lutein and neoxanthin.</text>
</comment>
<comment type="subunit">
    <text>The LHC complex consists of chlorophyll a-b binding proteins.</text>
</comment>
<comment type="subcellular location">
    <subcellularLocation>
        <location>Plastid</location>
        <location>Chloroplast thylakoid membrane</location>
        <topology>Multi-pass membrane protein</topology>
    </subcellularLocation>
</comment>
<comment type="domain">
    <text>The N-terminus of the protein extends into the stroma where it is involved with adhesion of granal membranes and post-translational modifications; both are believed to mediate the distribution of excitation energy between photosystems I and II.</text>
</comment>
<comment type="PTM">
    <text evidence="1">Photoregulated by reversible phosphorylation of its threonine residues.</text>
</comment>
<comment type="similarity">
    <text evidence="5">Belongs to the light-harvesting chlorophyll a/b-binding (LHC) protein family.</text>
</comment>
<feature type="transit peptide" description="Chloroplast" evidence="5">
    <location>
        <begin position="1"/>
        <end position="35"/>
    </location>
</feature>
<feature type="chain" id="PRO_0000003679" description="Chlorophyll a-b binding protein, chloroplastic">
    <location>
        <begin position="36"/>
        <end position="263"/>
    </location>
</feature>
<feature type="transmembrane region" description="Helical" evidence="4">
    <location>
        <begin position="97"/>
        <end position="117"/>
    </location>
</feature>
<feature type="transmembrane region" description="Helical" evidence="4">
    <location>
        <begin position="149"/>
        <end position="169"/>
    </location>
</feature>
<feature type="transmembrane region" description="Helical" evidence="4">
    <location>
        <begin position="217"/>
        <end position="237"/>
    </location>
</feature>
<feature type="binding site" description="axial binding residue" evidence="3">
    <location>
        <position position="55"/>
    </location>
    <ligand>
        <name>chlorophyll b</name>
        <dbReference type="ChEBI" id="CHEBI:61721"/>
        <label>1</label>
    </ligand>
    <ligandPart>
        <name>Mg</name>
        <dbReference type="ChEBI" id="CHEBI:25107"/>
    </ligandPart>
</feature>
<feature type="binding site" evidence="1">
    <location>
        <position position="77"/>
    </location>
    <ligand>
        <name>chlorophyll a</name>
        <dbReference type="ChEBI" id="CHEBI:58416"/>
        <label>1</label>
    </ligand>
</feature>
<feature type="binding site" evidence="1">
    <location>
        <position position="83"/>
    </location>
    <ligand>
        <name>chlorophyll a</name>
        <dbReference type="ChEBI" id="CHEBI:58416"/>
        <label>1</label>
    </ligand>
</feature>
<feature type="binding site" description="axial binding residue" evidence="3">
    <location>
        <position position="96"/>
    </location>
    <ligand>
        <name>chlorophyll a</name>
        <dbReference type="ChEBI" id="CHEBI:58416"/>
        <label>1</label>
    </ligand>
    <ligandPart>
        <name>Mg</name>
        <dbReference type="ChEBI" id="CHEBI:25107"/>
    </ligandPart>
</feature>
<feature type="binding site" description="axial binding residue" evidence="3">
    <location>
        <position position="99"/>
    </location>
    <ligand>
        <name>chlorophyll a</name>
        <dbReference type="ChEBI" id="CHEBI:58416"/>
        <label>2</label>
    </ligand>
    <ligandPart>
        <name>Mg</name>
        <dbReference type="ChEBI" id="CHEBI:25107"/>
    </ligandPart>
</feature>
<feature type="binding site" evidence="1">
    <location>
        <position position="101"/>
    </location>
    <ligand>
        <name>chlorophyll b</name>
        <dbReference type="ChEBI" id="CHEBI:61721"/>
        <label>2</label>
    </ligand>
</feature>
<feature type="binding site" evidence="1">
    <location>
        <position position="134"/>
    </location>
    <ligand>
        <name>chlorophyll a</name>
        <dbReference type="ChEBI" id="CHEBI:58416"/>
        <label>3</label>
    </ligand>
</feature>
<feature type="binding site" evidence="1">
    <location>
        <position position="144"/>
    </location>
    <ligand>
        <name>chlorophyll a</name>
        <dbReference type="ChEBI" id="CHEBI:58416"/>
        <label>3</label>
    </ligand>
</feature>
<feature type="binding site" description="axial binding residue" evidence="3">
    <location>
        <position position="150"/>
    </location>
    <ligand>
        <name>chlorophyll b</name>
        <dbReference type="ChEBI" id="CHEBI:61721"/>
        <label>2</label>
    </ligand>
    <ligandPart>
        <name>Mg</name>
        <dbReference type="ChEBI" id="CHEBI:25107"/>
    </ligandPart>
</feature>
<feature type="binding site" evidence="1">
    <location>
        <position position="154"/>
    </location>
    <ligand>
        <name>chlorophyll b</name>
        <dbReference type="ChEBI" id="CHEBI:61721"/>
        <label>3</label>
    </ligand>
</feature>
<feature type="binding site" evidence="1">
    <location>
        <position position="162"/>
    </location>
    <ligand>
        <name>chlorophyll b</name>
        <dbReference type="ChEBI" id="CHEBI:61721"/>
        <label>4</label>
    </ligand>
</feature>
<feature type="binding site" evidence="2">
    <location>
        <position position="162"/>
    </location>
    <ligand>
        <name>chlorophyll b</name>
        <dbReference type="ChEBI" id="CHEBI:61721"/>
        <label>5</label>
    </ligand>
</feature>
<feature type="binding site" description="axial binding residue" evidence="3">
    <location>
        <position position="170"/>
    </location>
    <ligand>
        <name>chlorophyll b</name>
        <dbReference type="ChEBI" id="CHEBI:61721"/>
        <label>3</label>
    </ligand>
    <ligandPart>
        <name>Mg</name>
        <dbReference type="ChEBI" id="CHEBI:25107"/>
    </ligandPart>
</feature>
<feature type="binding site" evidence="1">
    <location>
        <position position="173"/>
    </location>
    <ligand>
        <name>chlorophyll b</name>
        <dbReference type="ChEBI" id="CHEBI:61721"/>
        <label>4</label>
    </ligand>
</feature>
<feature type="binding site" evidence="1">
    <location>
        <position position="179"/>
    </location>
    <ligand>
        <name>chlorophyll b</name>
        <dbReference type="ChEBI" id="CHEBI:61721"/>
        <label>2</label>
    </ligand>
</feature>
<feature type="binding site" evidence="1">
    <location>
        <position position="210"/>
    </location>
    <ligand>
        <name>chlorophyll a</name>
        <dbReference type="ChEBI" id="CHEBI:58416"/>
        <label>5</label>
    </ligand>
</feature>
<feature type="binding site" description="axial binding residue" evidence="3">
    <location>
        <position position="211"/>
    </location>
    <ligand>
        <name>chlorophyll a</name>
        <dbReference type="ChEBI" id="CHEBI:58416"/>
        <label>3</label>
    </ligand>
    <ligandPart>
        <name>Mg</name>
        <dbReference type="ChEBI" id="CHEBI:25107"/>
    </ligandPart>
</feature>
<feature type="binding site" description="axial binding residue" evidence="3">
    <location>
        <position position="214"/>
    </location>
    <ligand>
        <name>chlorophyll a</name>
        <dbReference type="ChEBI" id="CHEBI:58416"/>
        <label>4</label>
    </ligand>
    <ligandPart>
        <name>Mg</name>
        <dbReference type="ChEBI" id="CHEBI:25107"/>
    </ligandPart>
</feature>
<feature type="binding site" evidence="1">
    <location>
        <position position="216"/>
    </location>
    <ligand>
        <name>chlorophyll a</name>
        <dbReference type="ChEBI" id="CHEBI:58416"/>
        <label>1</label>
    </ligand>
</feature>
<feature type="binding site" description="axial binding residue" evidence="3">
    <location>
        <position position="228"/>
    </location>
    <ligand>
        <name>chlorophyll a</name>
        <dbReference type="ChEBI" id="CHEBI:58416"/>
        <label>5</label>
    </ligand>
    <ligandPart>
        <name>Mg</name>
        <dbReference type="ChEBI" id="CHEBI:25107"/>
    </ligandPart>
</feature>
<feature type="binding site" description="axial binding residue" evidence="3">
    <location>
        <position position="243"/>
    </location>
    <ligand>
        <name>chlorophyll a</name>
        <dbReference type="ChEBI" id="CHEBI:58416"/>
        <label>6</label>
    </ligand>
    <ligandPart>
        <name>Mg</name>
        <dbReference type="ChEBI" id="CHEBI:25107"/>
    </ligandPart>
</feature>
<feature type="binding site" evidence="1">
    <location>
        <position position="252"/>
    </location>
    <ligand>
        <name>chlorophyll a</name>
        <dbReference type="ChEBI" id="CHEBI:58416"/>
        <label>6</label>
    </ligand>
</feature>
<feature type="binding site" evidence="1">
    <location>
        <position position="259"/>
    </location>
    <ligand>
        <name>chlorophyll b</name>
        <dbReference type="ChEBI" id="CHEBI:61721"/>
        <label>5</label>
    </ligand>
</feature>
<feature type="modified residue" description="N2-acetylarginine" evidence="1">
    <location>
        <position position="36"/>
    </location>
</feature>
<feature type="modified residue" description="Phosphothreonine" evidence="1">
    <location>
        <position position="38"/>
    </location>
</feature>
<feature type="sequence conflict" description="In Ref. 1; BAA00537." evidence="5" ref="1">
    <original>EL</original>
    <variation>DV</variation>
    <location>
        <begin position="21"/>
        <end position="22"/>
    </location>
</feature>
<feature type="sequence conflict" description="In Ref. 1; BAA00537." evidence="5" ref="1">
    <original>V</original>
    <variation>L</variation>
    <location>
        <position position="97"/>
    </location>
</feature>
<feature type="sequence conflict" description="In Ref. 2; AAC15992." evidence="5" ref="2">
    <original>G</original>
    <variation>S</variation>
    <location>
        <position position="189"/>
    </location>
</feature>
<feature type="sequence conflict" description="In Ref. 1; BAA00537." evidence="5" ref="1">
    <original>A</original>
    <variation>T</variation>
    <location>
        <position position="245"/>
    </location>
</feature>
<feature type="sequence conflict" description="In Ref. 1; BAA00537." evidence="5" ref="1">
    <original>A</original>
    <variation>S</variation>
    <location>
        <position position="254"/>
    </location>
</feature>
<name>CB23_ORYSJ</name>
<keyword id="KW-0007">Acetylation</keyword>
<keyword id="KW-0148">Chlorophyll</keyword>
<keyword id="KW-0150">Chloroplast</keyword>
<keyword id="KW-0157">Chromophore</keyword>
<keyword id="KW-0460">Magnesium</keyword>
<keyword id="KW-0472">Membrane</keyword>
<keyword id="KW-0479">Metal-binding</keyword>
<keyword id="KW-0597">Phosphoprotein</keyword>
<keyword id="KW-0602">Photosynthesis</keyword>
<keyword id="KW-0603">Photosystem I</keyword>
<keyword id="KW-0604">Photosystem II</keyword>
<keyword id="KW-0934">Plastid</keyword>
<keyword id="KW-1185">Reference proteome</keyword>
<keyword id="KW-0793">Thylakoid</keyword>
<keyword id="KW-0809">Transit peptide</keyword>
<keyword id="KW-0812">Transmembrane</keyword>
<keyword id="KW-1133">Transmembrane helix</keyword>
<accession>Q10HD0</accession>
<accession>A0A0P0VZU4</accession>
<accession>O22543</accession>
<accession>O65326</accession>
<accession>P27519</accession>
<accession>Q6ATT3</accession>
<evidence type="ECO:0000250" key="1"/>
<evidence type="ECO:0000250" key="2">
    <source>
        <dbReference type="UniProtKB" id="P07371"/>
    </source>
</evidence>
<evidence type="ECO:0000250" key="3">
    <source>
        <dbReference type="UniProtKB" id="P12333"/>
    </source>
</evidence>
<evidence type="ECO:0000255" key="4"/>
<evidence type="ECO:0000305" key="5"/>
<organism>
    <name type="scientific">Oryza sativa subsp. japonica</name>
    <name type="common">Rice</name>
    <dbReference type="NCBI Taxonomy" id="39947"/>
    <lineage>
        <taxon>Eukaryota</taxon>
        <taxon>Viridiplantae</taxon>
        <taxon>Streptophyta</taxon>
        <taxon>Embryophyta</taxon>
        <taxon>Tracheophyta</taxon>
        <taxon>Spermatophyta</taxon>
        <taxon>Magnoliopsida</taxon>
        <taxon>Liliopsida</taxon>
        <taxon>Poales</taxon>
        <taxon>Poaceae</taxon>
        <taxon>BOP clade</taxon>
        <taxon>Oryzoideae</taxon>
        <taxon>Oryzeae</taxon>
        <taxon>Oryzinae</taxon>
        <taxon>Oryza</taxon>
        <taxon>Oryza sativa</taxon>
    </lineage>
</organism>
<protein>
    <recommendedName>
        <fullName>Chlorophyll a-b binding protein, chloroplastic</fullName>
    </recommendedName>
    <alternativeName>
        <fullName>LHCII type I CAB</fullName>
        <shortName>LHCP</shortName>
    </alternativeName>
</protein>
<proteinExistence type="evidence at transcript level"/>
<dbReference type="EMBL" id="D00642">
    <property type="protein sequence ID" value="BAA00537.1"/>
    <property type="molecule type" value="mRNA"/>
</dbReference>
<dbReference type="EMBL" id="AF061577">
    <property type="protein sequence ID" value="AAC15992.1"/>
    <property type="molecule type" value="mRNA"/>
</dbReference>
<dbReference type="EMBL" id="AC135564">
    <property type="protein sequence ID" value="AAT81763.1"/>
    <property type="molecule type" value="Genomic_DNA"/>
</dbReference>
<dbReference type="EMBL" id="DP000009">
    <property type="protein sequence ID" value="ABF97413.1"/>
    <property type="molecule type" value="Genomic_DNA"/>
</dbReference>
<dbReference type="EMBL" id="AP008209">
    <property type="protein sequence ID" value="BAF12500.1"/>
    <property type="molecule type" value="Genomic_DNA"/>
</dbReference>
<dbReference type="EMBL" id="AP014959">
    <property type="protein sequence ID" value="BAS85134.1"/>
    <property type="molecule type" value="Genomic_DNA"/>
</dbReference>
<dbReference type="EMBL" id="CM000140">
    <property type="protein sequence ID" value="EAZ27662.1"/>
    <property type="molecule type" value="Genomic_DNA"/>
</dbReference>
<dbReference type="PIR" id="B44956">
    <property type="entry name" value="B44956"/>
</dbReference>
<dbReference type="RefSeq" id="XP_015632068.1">
    <property type="nucleotide sequence ID" value="XM_015776582.1"/>
</dbReference>
<dbReference type="SMR" id="Q10HD0"/>
<dbReference type="FunCoup" id="Q10HD0">
    <property type="interactions" value="652"/>
</dbReference>
<dbReference type="STRING" id="39947.Q10HD0"/>
<dbReference type="PaxDb" id="39947-Q10HD0"/>
<dbReference type="EnsemblPlants" id="Os03t0592500-01">
    <property type="protein sequence ID" value="Os03t0592500-01"/>
    <property type="gene ID" value="Os03g0592500"/>
</dbReference>
<dbReference type="Gramene" id="Os03t0592500-01">
    <property type="protein sequence ID" value="Os03t0592500-01"/>
    <property type="gene ID" value="Os03g0592500"/>
</dbReference>
<dbReference type="KEGG" id="dosa:Os03g0592500"/>
<dbReference type="eggNOG" id="ENOG502QPU1">
    <property type="taxonomic scope" value="Eukaryota"/>
</dbReference>
<dbReference type="HOGENOM" id="CLU_057943_2_0_1"/>
<dbReference type="InParanoid" id="Q10HD0"/>
<dbReference type="OMA" id="CEMATAK"/>
<dbReference type="OrthoDB" id="423598at2759"/>
<dbReference type="Proteomes" id="UP000000763">
    <property type="component" value="Chromosome 3"/>
</dbReference>
<dbReference type="Proteomes" id="UP000007752">
    <property type="component" value="Chromosome 3"/>
</dbReference>
<dbReference type="Proteomes" id="UP000059680">
    <property type="component" value="Chromosome 3"/>
</dbReference>
<dbReference type="ExpressionAtlas" id="Q10HD0">
    <property type="expression patterns" value="baseline and differential"/>
</dbReference>
<dbReference type="GO" id="GO:0009535">
    <property type="term" value="C:chloroplast thylakoid membrane"/>
    <property type="evidence" value="ECO:0000318"/>
    <property type="project" value="GO_Central"/>
</dbReference>
<dbReference type="GO" id="GO:0009522">
    <property type="term" value="C:photosystem I"/>
    <property type="evidence" value="ECO:0007669"/>
    <property type="project" value="UniProtKB-KW"/>
</dbReference>
<dbReference type="GO" id="GO:0009523">
    <property type="term" value="C:photosystem II"/>
    <property type="evidence" value="ECO:0007669"/>
    <property type="project" value="UniProtKB-KW"/>
</dbReference>
<dbReference type="GO" id="GO:0016168">
    <property type="term" value="F:chlorophyll binding"/>
    <property type="evidence" value="ECO:0007669"/>
    <property type="project" value="UniProtKB-KW"/>
</dbReference>
<dbReference type="GO" id="GO:0046872">
    <property type="term" value="F:metal ion binding"/>
    <property type="evidence" value="ECO:0007669"/>
    <property type="project" value="UniProtKB-KW"/>
</dbReference>
<dbReference type="GO" id="GO:0009768">
    <property type="term" value="P:photosynthesis, light harvesting in photosystem I"/>
    <property type="evidence" value="ECO:0000318"/>
    <property type="project" value="GO_Central"/>
</dbReference>
<dbReference type="GO" id="GO:0009416">
    <property type="term" value="P:response to light stimulus"/>
    <property type="evidence" value="ECO:0000318"/>
    <property type="project" value="GO_Central"/>
</dbReference>
<dbReference type="FunFam" id="1.10.3460.10:FF:000001">
    <property type="entry name" value="Chlorophyll a-b binding protein, chloroplastic"/>
    <property type="match status" value="1"/>
</dbReference>
<dbReference type="Gene3D" id="1.10.3460.10">
    <property type="entry name" value="Chlorophyll a/b binding protein domain"/>
    <property type="match status" value="1"/>
</dbReference>
<dbReference type="InterPro" id="IPR001344">
    <property type="entry name" value="Chloro_AB-bd_pln"/>
</dbReference>
<dbReference type="InterPro" id="IPR022796">
    <property type="entry name" value="Chloroa_b-bind"/>
</dbReference>
<dbReference type="PANTHER" id="PTHR21649">
    <property type="entry name" value="CHLOROPHYLL A/B BINDING PROTEIN"/>
    <property type="match status" value="1"/>
</dbReference>
<dbReference type="Pfam" id="PF00504">
    <property type="entry name" value="Chloroa_b-bind"/>
    <property type="match status" value="1"/>
</dbReference>
<dbReference type="SUPFAM" id="SSF103511">
    <property type="entry name" value="Chlorophyll a-b binding protein"/>
    <property type="match status" value="1"/>
</dbReference>
<sequence length="263" mass="28495">MAASALHQTTSFLGTAPRRDELVRRVGDSGGRITMRRTVKSAPQSIWYGPDRPKYLGPFSEQTPSYLTGEFPGDYGWDTAGLSADPETFARNRELEVIHSRWAMLGALGCVFPEILSKNGVKFGEAVWFKAGAQIFSEGGLDYLGNPNLVHAQSILAIWAVQVVLMGFVEGYRVGGGPLGEGLDKVYPGGAFDPLGLADDPDTFAELKVKELKNGRLAMFSMFGFFVQAIVTGKGPIENLFDHVADPVANNAWAYATNFVPGK</sequence>